<comment type="function">
    <text evidence="1">Component of the coat protein complex II (COPII) which promotes the formation of transport vesicles from the endoplasmic reticulum (ER). The coat has two main functions, the physical deformation of the endoplasmic reticulum membrane into vesicles and the selection of cargo molecules (By similarity).</text>
</comment>
<comment type="subunit">
    <text evidence="1">The COPII coat is composed of at least 5 proteins: the SEC23/24 complex, the SEC13/31 complex, and the protein SAR1. SEC13 and SEC31 make a 2:2 tetramer that forms the edge element of the COPII outer coat. The tetramer self-assembles in multiple copies to form the complete polyhedral cage. Interacts (via WD 8) with SEC13 (By similarity).</text>
</comment>
<comment type="subcellular location">
    <subcellularLocation>
        <location evidence="1">Cytoplasmic vesicle</location>
        <location evidence="1">COPII-coated vesicle membrane</location>
        <topology evidence="1">Peripheral membrane protein</topology>
        <orientation evidence="1">Cytoplasmic side</orientation>
    </subcellularLocation>
    <subcellularLocation>
        <location evidence="1">Endoplasmic reticulum membrane</location>
        <topology evidence="1">Peripheral membrane protein</topology>
        <orientation evidence="1">Cytoplasmic side</orientation>
    </subcellularLocation>
</comment>
<comment type="similarity">
    <text evidence="4">Belongs to the WD repeat SEC31 family.</text>
</comment>
<protein>
    <recommendedName>
        <fullName>Protein transport protein SEC31</fullName>
    </recommendedName>
</protein>
<feature type="chain" id="PRO_0000295426" description="Protein transport protein SEC31">
    <location>
        <begin position="1"/>
        <end position="1273"/>
    </location>
</feature>
<feature type="repeat" description="WD 1">
    <location>
        <begin position="5"/>
        <end position="47"/>
    </location>
</feature>
<feature type="repeat" description="WD 2">
    <location>
        <begin position="66"/>
        <end position="109"/>
    </location>
</feature>
<feature type="repeat" description="WD 3">
    <location>
        <begin position="118"/>
        <end position="158"/>
    </location>
</feature>
<feature type="repeat" description="WD 4">
    <location>
        <begin position="164"/>
        <end position="204"/>
    </location>
</feature>
<feature type="repeat" description="WD 5">
    <location>
        <begin position="208"/>
        <end position="251"/>
    </location>
</feature>
<feature type="repeat" description="WD 6">
    <location>
        <begin position="255"/>
        <end position="295"/>
    </location>
</feature>
<feature type="repeat" description="WD 7">
    <location>
        <begin position="298"/>
        <end position="338"/>
    </location>
</feature>
<feature type="repeat" description="WD 8; interaction with SEC13" evidence="2">
    <location>
        <begin position="383"/>
        <end position="411"/>
    </location>
</feature>
<feature type="region of interest" description="Disordered" evidence="3">
    <location>
        <begin position="489"/>
        <end position="515"/>
    </location>
</feature>
<feature type="region of interest" description="Disordered" evidence="3">
    <location>
        <begin position="808"/>
        <end position="921"/>
    </location>
</feature>
<feature type="region of interest" description="Disordered" evidence="3">
    <location>
        <begin position="940"/>
        <end position="1168"/>
    </location>
</feature>
<feature type="compositionally biased region" description="Polar residues" evidence="3">
    <location>
        <begin position="859"/>
        <end position="886"/>
    </location>
</feature>
<feature type="compositionally biased region" description="Polar residues" evidence="3">
    <location>
        <begin position="912"/>
        <end position="921"/>
    </location>
</feature>
<feature type="compositionally biased region" description="Low complexity" evidence="3">
    <location>
        <begin position="951"/>
        <end position="961"/>
    </location>
</feature>
<feature type="compositionally biased region" description="Pro residues" evidence="3">
    <location>
        <begin position="991"/>
        <end position="1004"/>
    </location>
</feature>
<feature type="compositionally biased region" description="Polar residues" evidence="3">
    <location>
        <begin position="1018"/>
        <end position="1036"/>
    </location>
</feature>
<feature type="compositionally biased region" description="Pro residues" evidence="3">
    <location>
        <begin position="1047"/>
        <end position="1063"/>
    </location>
</feature>
<feature type="compositionally biased region" description="Pro residues" evidence="3">
    <location>
        <begin position="1076"/>
        <end position="1098"/>
    </location>
</feature>
<evidence type="ECO:0000250" key="1"/>
<evidence type="ECO:0000255" key="2">
    <source>
        <dbReference type="PROSITE-ProRule" id="PRU00221"/>
    </source>
</evidence>
<evidence type="ECO:0000256" key="3">
    <source>
        <dbReference type="SAM" id="MobiDB-lite"/>
    </source>
</evidence>
<evidence type="ECO:0000305" key="4"/>
<sequence>MVRLREIPRTAALAWSPGSASPYIATGTRAGAVDADFSNETDLELWDLALEQEGGSAELQPAAKLSTESGFHDLAWTESEDSSRGIIAGALENGSLDLWNADKLLSGASDPLVSRASQHSGPVKTLQFNPRHSNLLATGGSKGELFISDLNNIDHPFRLGNVNARLDDIECLDWNKKVPHILVTGSSAGFVTVWDVKTKKESLTLNNLGRKAVSAVAWDPEKPTKLITSIPLETDPLILVWDLRNSNAPERVLRGHESGVLSLSWCAQDPDLLLSSGKDNRTICWNPQTGVQYGEFPVVTNWTFLTRWNPHNPNMFATASFDGRISIQTIQNTKSDAIAQAGASQVQPVDDEDFFAKAQSQPQASTFSLPTAPKWLQRPSSVSFGFGGRVISVGLTDPSKPASRTSKVRITRFEVDSILSSTTQTFEEALKAGDLRRICETRIENAQNDSDRVDWKIIETLISDNPKMQLINYLGFSSEVDETADSLSKLGLGKSEDGGANGVPESDSRGPGVKKHKRLSSIFDTHADSDNFLTDLSASKGAKTNNPFQIYTGSESEADRGITRALLLGDFEKALDICLQEDRMSDAFMVAICGGQKCIDKAQEAYFQKQLEGPNYLRLMAAIVGKNLWDIVHNAGLANWKEAIATICTFATDAEFPDLCETLGDRLEEQAKAEGDKESRKNAAFCFLASSKLEKVVGIWIDELQENENKAIQEATNGETSFSIHVRALQNLIEKVTVFRHVTKFEDAETQKPSDWKLTLLYDKYIEYADVAAAHGQLGVAERYLDLLPQAHPAAVVARNRIKLATEKTTARSAPAHISAASHLTTKPPQQPNVPRGMYNPSAPMTQANNLFKPPAPMQVSNPYAPTGASSAYSPAGYQPSQQHQPTVPLGGPPQAFGTAQQSNIAPPPRAANQSPSTVTSYTQATNLPAWNDLPEGFAKALTPRRGTPSAAAATISSPFPHQQPPQPSQSPQTISPHQPPPPRQRTSMAVPPPPRGPAPPRMTSPPAVGQPHGFPSTRKTSLNFKCIYPTTQHTPTGPGMNVPQIPRGPSPYNAPPTGPPPSNRYAPSPAAQPSAPQPPRAAVAAPPPTGPPAPAPAQSPYSYQHPPPAHGSYAPPSAPTGARPDHQPQHQPPPPGSSPVSRPGTAQSQRKPAPAAKYPPGDRSHIPANAQPIFEILSADMQRVKARAPTSFKAQVNDAERRLNILFDHLNNEDLLKPATVESMAELARALQARDYETAQSIHLDIFTNRNDECGNWMVGVKRLIGMSRATP</sequence>
<dbReference type="EMBL" id="AY772719">
    <property type="protein sequence ID" value="AAV59730.1"/>
    <property type="molecule type" value="mRNA"/>
</dbReference>
<dbReference type="SMR" id="Q5S580"/>
<dbReference type="GO" id="GO:0030127">
    <property type="term" value="C:COPII vesicle coat"/>
    <property type="evidence" value="ECO:0007669"/>
    <property type="project" value="TreeGrafter"/>
</dbReference>
<dbReference type="GO" id="GO:0070971">
    <property type="term" value="C:endoplasmic reticulum exit site"/>
    <property type="evidence" value="ECO:0007669"/>
    <property type="project" value="TreeGrafter"/>
</dbReference>
<dbReference type="GO" id="GO:0005789">
    <property type="term" value="C:endoplasmic reticulum membrane"/>
    <property type="evidence" value="ECO:0007669"/>
    <property type="project" value="UniProtKB-SubCell"/>
</dbReference>
<dbReference type="GO" id="GO:0005198">
    <property type="term" value="F:structural molecule activity"/>
    <property type="evidence" value="ECO:0007669"/>
    <property type="project" value="TreeGrafter"/>
</dbReference>
<dbReference type="GO" id="GO:0090110">
    <property type="term" value="P:COPII-coated vesicle cargo loading"/>
    <property type="evidence" value="ECO:0007669"/>
    <property type="project" value="TreeGrafter"/>
</dbReference>
<dbReference type="GO" id="GO:0007029">
    <property type="term" value="P:endoplasmic reticulum organization"/>
    <property type="evidence" value="ECO:0007669"/>
    <property type="project" value="TreeGrafter"/>
</dbReference>
<dbReference type="GO" id="GO:0015031">
    <property type="term" value="P:protein transport"/>
    <property type="evidence" value="ECO:0007669"/>
    <property type="project" value="UniProtKB-KW"/>
</dbReference>
<dbReference type="FunFam" id="1.20.940.10:FF:000007">
    <property type="entry name" value="Protein transport protein (SEC31), putative"/>
    <property type="match status" value="1"/>
</dbReference>
<dbReference type="FunFam" id="2.130.10.10:FF:000193">
    <property type="entry name" value="Protein transport protein SEC31, putative"/>
    <property type="match status" value="1"/>
</dbReference>
<dbReference type="Gene3D" id="1.25.40.1030">
    <property type="match status" value="1"/>
</dbReference>
<dbReference type="Gene3D" id="1.20.940.10">
    <property type="entry name" value="Functional domain of the splicing factor Prp18"/>
    <property type="match status" value="1"/>
</dbReference>
<dbReference type="Gene3D" id="2.130.10.10">
    <property type="entry name" value="YVTN repeat-like/Quinoprotein amine dehydrogenase"/>
    <property type="match status" value="1"/>
</dbReference>
<dbReference type="InterPro" id="IPR024298">
    <property type="entry name" value="Sec16_Sec23-bd"/>
</dbReference>
<dbReference type="InterPro" id="IPR040251">
    <property type="entry name" value="SEC31-like"/>
</dbReference>
<dbReference type="InterPro" id="IPR009917">
    <property type="entry name" value="SRA1/Sec31"/>
</dbReference>
<dbReference type="InterPro" id="IPR015943">
    <property type="entry name" value="WD40/YVTN_repeat-like_dom_sf"/>
</dbReference>
<dbReference type="InterPro" id="IPR036322">
    <property type="entry name" value="WD40_repeat_dom_sf"/>
</dbReference>
<dbReference type="InterPro" id="IPR001680">
    <property type="entry name" value="WD40_rpt"/>
</dbReference>
<dbReference type="PANTHER" id="PTHR13923">
    <property type="entry name" value="SEC31-RELATED PROTEIN"/>
    <property type="match status" value="1"/>
</dbReference>
<dbReference type="PANTHER" id="PTHR13923:SF11">
    <property type="entry name" value="SECRETORY 31, ISOFORM D"/>
    <property type="match status" value="1"/>
</dbReference>
<dbReference type="Pfam" id="PF07304">
    <property type="entry name" value="SRA1"/>
    <property type="match status" value="1"/>
</dbReference>
<dbReference type="Pfam" id="PF12931">
    <property type="entry name" value="TPR_Sec16"/>
    <property type="match status" value="1"/>
</dbReference>
<dbReference type="Pfam" id="PF00400">
    <property type="entry name" value="WD40"/>
    <property type="match status" value="1"/>
</dbReference>
<dbReference type="SMART" id="SM00320">
    <property type="entry name" value="WD40"/>
    <property type="match status" value="6"/>
</dbReference>
<dbReference type="SUPFAM" id="SSF50978">
    <property type="entry name" value="WD40 repeat-like"/>
    <property type="match status" value="1"/>
</dbReference>
<dbReference type="PROSITE" id="PS50082">
    <property type="entry name" value="WD_REPEATS_2"/>
    <property type="match status" value="2"/>
</dbReference>
<dbReference type="PROSITE" id="PS50294">
    <property type="entry name" value="WD_REPEATS_REGION"/>
    <property type="match status" value="1"/>
</dbReference>
<name>SEC31_AJECA</name>
<keyword id="KW-0968">Cytoplasmic vesicle</keyword>
<keyword id="KW-0903">Direct protein sequencing</keyword>
<keyword id="KW-0256">Endoplasmic reticulum</keyword>
<keyword id="KW-0931">ER-Golgi transport</keyword>
<keyword id="KW-0472">Membrane</keyword>
<keyword id="KW-0653">Protein transport</keyword>
<keyword id="KW-0677">Repeat</keyword>
<keyword id="KW-0813">Transport</keyword>
<keyword id="KW-0853">WD repeat</keyword>
<organism>
    <name type="scientific">Ajellomyces capsulatus</name>
    <name type="common">Darling's disease fungus</name>
    <name type="synonym">Histoplasma capsulatum</name>
    <dbReference type="NCBI Taxonomy" id="5037"/>
    <lineage>
        <taxon>Eukaryota</taxon>
        <taxon>Fungi</taxon>
        <taxon>Dikarya</taxon>
        <taxon>Ascomycota</taxon>
        <taxon>Pezizomycotina</taxon>
        <taxon>Eurotiomycetes</taxon>
        <taxon>Eurotiomycetidae</taxon>
        <taxon>Onygenales</taxon>
        <taxon>Ajellomycetaceae</taxon>
        <taxon>Histoplasma</taxon>
    </lineage>
</organism>
<accession>Q5S580</accession>
<proteinExistence type="evidence at protein level"/>
<gene>
    <name type="primary">SEC31</name>
</gene>
<reference key="1">
    <citation type="journal article" date="2006" name="J. Infect. Dis.">
        <title>Pulmonary V beta 4+ T cells from Histoplasma capsulatum-infected mice respond to a homologue of Sec31 that confers a protective response.</title>
        <authorList>
            <person name="Scheckelhoff M.R."/>
            <person name="Deepe G.S. Jr."/>
        </authorList>
    </citation>
    <scope>NUCLEOTIDE SEQUENCE [MRNA]</scope>
    <scope>PROTEIN SEQUENCE OF 255-270; 335-346 AND 405-412</scope>
    <source>
        <strain>ATCC 26032 / G217B</strain>
    </source>
</reference>